<gene>
    <name type="primary">TAS2R4</name>
</gene>
<proteinExistence type="inferred from homology"/>
<sequence>MLRLFYFSAIIASVILNFVGIIMNLFITVVNCKTWVKSHRISSSDRILFSLGITRFLMLGLFLVNTIYFVSSNXERSVYLSAFFVLCFMFLDSSSLWFVTLLNILYCVKITNFQHSVFLLLKRNISPKIPRLLLACVLISAFTTCLYITLSQASPFPELVTTRNNTSFNINEGILSLVVSLVLSSSLQFIINVTSASLLIHSLRRHIQKMQKNATGFWNPQTEAHVGAMKLMVYFLILYIPYSVATLVQYLPFYAGMDMGTKSICLIFATLYSPGHSVLIIITHPKLKTTAKKILCFKK</sequence>
<name>TA2R4_PANTR</name>
<accession>Q646B0</accession>
<protein>
    <recommendedName>
        <fullName>Taste receptor type 2 member 4</fullName>
        <shortName>T2R4</shortName>
    </recommendedName>
</protein>
<keyword id="KW-1003">Cell membrane</keyword>
<keyword id="KW-0966">Cell projection</keyword>
<keyword id="KW-0969">Cilium</keyword>
<keyword id="KW-0297">G-protein coupled receptor</keyword>
<keyword id="KW-0325">Glycoprotein</keyword>
<keyword id="KW-0472">Membrane</keyword>
<keyword id="KW-0675">Receptor</keyword>
<keyword id="KW-1185">Reference proteome</keyword>
<keyword id="KW-0716">Sensory transduction</keyword>
<keyword id="KW-0919">Taste</keyword>
<keyword id="KW-0807">Transducer</keyword>
<keyword id="KW-0812">Transmembrane</keyword>
<keyword id="KW-1133">Transmembrane helix</keyword>
<feature type="chain" id="PRO_0000082207" description="Taste receptor type 2 member 4">
    <location>
        <begin position="1"/>
        <end position="299"/>
    </location>
</feature>
<feature type="topological domain" description="Extracellular" evidence="2">
    <location>
        <begin position="1"/>
        <end position="9"/>
    </location>
</feature>
<feature type="transmembrane region" description="Helical; Name=1" evidence="2">
    <location>
        <begin position="10"/>
        <end position="30"/>
    </location>
</feature>
<feature type="topological domain" description="Cytoplasmic" evidence="2">
    <location>
        <begin position="31"/>
        <end position="46"/>
    </location>
</feature>
<feature type="transmembrane region" description="Helical; Name=2" evidence="2">
    <location>
        <begin position="47"/>
        <end position="67"/>
    </location>
</feature>
<feature type="topological domain" description="Extracellular" evidence="2">
    <location>
        <begin position="68"/>
        <end position="81"/>
    </location>
</feature>
<feature type="transmembrane region" description="Helical; Name=3" evidence="2">
    <location>
        <begin position="82"/>
        <end position="102"/>
    </location>
</feature>
<feature type="topological domain" description="Cytoplasmic" evidence="2">
    <location>
        <begin position="103"/>
        <end position="131"/>
    </location>
</feature>
<feature type="transmembrane region" description="Helical; Name=4" evidence="2">
    <location>
        <begin position="132"/>
        <end position="152"/>
    </location>
</feature>
<feature type="topological domain" description="Extracellular" evidence="2">
    <location>
        <begin position="153"/>
        <end position="172"/>
    </location>
</feature>
<feature type="transmembrane region" description="Helical; Name=5" evidence="2">
    <location>
        <begin position="173"/>
        <end position="193"/>
    </location>
</feature>
<feature type="topological domain" description="Cytoplasmic" evidence="2">
    <location>
        <begin position="194"/>
        <end position="230"/>
    </location>
</feature>
<feature type="transmembrane region" description="Helical; Name=6" evidence="2">
    <location>
        <begin position="231"/>
        <end position="251"/>
    </location>
</feature>
<feature type="topological domain" description="Extracellular" evidence="2">
    <location>
        <begin position="252"/>
        <end position="262"/>
    </location>
</feature>
<feature type="transmembrane region" description="Helical; Name=7" evidence="2">
    <location>
        <begin position="263"/>
        <end position="283"/>
    </location>
</feature>
<feature type="topological domain" description="Cytoplasmic" evidence="2">
    <location>
        <begin position="284"/>
        <end position="299"/>
    </location>
</feature>
<feature type="glycosylation site" description="N-linked (GlcNAc...) asparagine" evidence="2">
    <location>
        <position position="164"/>
    </location>
</feature>
<feature type="glycosylation site" description="N-linked (GlcNAc...) asparagine" evidence="2">
    <location>
        <position position="165"/>
    </location>
</feature>
<organism>
    <name type="scientific">Pan troglodytes</name>
    <name type="common">Chimpanzee</name>
    <dbReference type="NCBI Taxonomy" id="9598"/>
    <lineage>
        <taxon>Eukaryota</taxon>
        <taxon>Metazoa</taxon>
        <taxon>Chordata</taxon>
        <taxon>Craniata</taxon>
        <taxon>Vertebrata</taxon>
        <taxon>Euteleostomi</taxon>
        <taxon>Mammalia</taxon>
        <taxon>Eutheria</taxon>
        <taxon>Euarchontoglires</taxon>
        <taxon>Primates</taxon>
        <taxon>Haplorrhini</taxon>
        <taxon>Catarrhini</taxon>
        <taxon>Hominidae</taxon>
        <taxon>Pan</taxon>
    </lineage>
</organism>
<evidence type="ECO:0000250" key="1"/>
<evidence type="ECO:0000255" key="2"/>
<evidence type="ECO:0000305" key="3"/>
<reference key="1">
    <citation type="journal article" date="2005" name="Mol. Biol. Evol.">
        <title>Evolution of bitter taste receptors in humans and apes.</title>
        <authorList>
            <person name="Fischer A."/>
            <person name="Gilad Y."/>
            <person name="Man O."/>
            <person name="Paeaebo S."/>
        </authorList>
    </citation>
    <scope>NUCLEOTIDE SEQUENCE [GENOMIC DNA]</scope>
</reference>
<dbReference type="EMBL" id="AY724893">
    <property type="protein sequence ID" value="AAU21109.1"/>
    <property type="molecule type" value="Genomic_DNA"/>
</dbReference>
<dbReference type="RefSeq" id="NP_001009161.1">
    <property type="nucleotide sequence ID" value="NM_001009161.1"/>
</dbReference>
<dbReference type="FunCoup" id="Q646B0">
    <property type="interactions" value="207"/>
</dbReference>
<dbReference type="STRING" id="9598.ENSPTRP00000054263"/>
<dbReference type="GlyCosmos" id="Q646B0">
    <property type="glycosylation" value="2 sites, No reported glycans"/>
</dbReference>
<dbReference type="PaxDb" id="9598-ENSPTRP00000054263"/>
<dbReference type="GeneID" id="494114"/>
<dbReference type="KEGG" id="ptr:494114"/>
<dbReference type="CTD" id="50832"/>
<dbReference type="eggNOG" id="ENOG502S2SI">
    <property type="taxonomic scope" value="Eukaryota"/>
</dbReference>
<dbReference type="InParanoid" id="Q646B0"/>
<dbReference type="OrthoDB" id="8846at9604"/>
<dbReference type="Proteomes" id="UP000002277">
    <property type="component" value="Unplaced"/>
</dbReference>
<dbReference type="GO" id="GO:0060170">
    <property type="term" value="C:ciliary membrane"/>
    <property type="evidence" value="ECO:0007669"/>
    <property type="project" value="UniProtKB-SubCell"/>
</dbReference>
<dbReference type="GO" id="GO:0016020">
    <property type="term" value="C:membrane"/>
    <property type="evidence" value="ECO:0000318"/>
    <property type="project" value="GO_Central"/>
</dbReference>
<dbReference type="GO" id="GO:0033038">
    <property type="term" value="F:bitter taste receptor activity"/>
    <property type="evidence" value="ECO:0000318"/>
    <property type="project" value="GO_Central"/>
</dbReference>
<dbReference type="GO" id="GO:0004930">
    <property type="term" value="F:G protein-coupled receptor activity"/>
    <property type="evidence" value="ECO:0007669"/>
    <property type="project" value="UniProtKB-KW"/>
</dbReference>
<dbReference type="GO" id="GO:0001580">
    <property type="term" value="P:detection of chemical stimulus involved in sensory perception of bitter taste"/>
    <property type="evidence" value="ECO:0000318"/>
    <property type="project" value="GO_Central"/>
</dbReference>
<dbReference type="CDD" id="cd15013">
    <property type="entry name" value="7tm_TAS2R4"/>
    <property type="match status" value="1"/>
</dbReference>
<dbReference type="FunFam" id="1.20.1070.10:FF:000055">
    <property type="entry name" value="Taste receptor type 2"/>
    <property type="match status" value="1"/>
</dbReference>
<dbReference type="Gene3D" id="1.20.1070.10">
    <property type="entry name" value="Rhodopsin 7-helix transmembrane proteins"/>
    <property type="match status" value="1"/>
</dbReference>
<dbReference type="InterPro" id="IPR007960">
    <property type="entry name" value="TAS2R"/>
</dbReference>
<dbReference type="InterPro" id="IPR030055">
    <property type="entry name" value="TAS2R4"/>
</dbReference>
<dbReference type="PANTHER" id="PTHR11394">
    <property type="entry name" value="TASTE RECEPTOR TYPE 2"/>
    <property type="match status" value="1"/>
</dbReference>
<dbReference type="PANTHER" id="PTHR11394:SF55">
    <property type="entry name" value="TASTE RECEPTOR TYPE 2 MEMBER 4"/>
    <property type="match status" value="1"/>
</dbReference>
<dbReference type="Pfam" id="PF05296">
    <property type="entry name" value="TAS2R"/>
    <property type="match status" value="1"/>
</dbReference>
<dbReference type="SUPFAM" id="SSF81321">
    <property type="entry name" value="Family A G protein-coupled receptor-like"/>
    <property type="match status" value="1"/>
</dbReference>
<comment type="function">
    <text evidence="1">Gustducin-coupled receptor implicated in the perception of bitter compounds in the oral cavity and the gastrointestinal tract. Signals through PLCB2 and the calcium-regulated cation channel TRPM5 (By similarity). In airway epithelial cells, binding of denatonium increases the intracellular calcium ion concentration and stimulates ciliary beat frequency (By similarity).</text>
</comment>
<comment type="subcellular location">
    <subcellularLocation>
        <location>Membrane</location>
        <topology>Multi-pass membrane protein</topology>
    </subcellularLocation>
    <subcellularLocation>
        <location>Cell projection</location>
        <location>Cilium membrane</location>
    </subcellularLocation>
    <text evidence="1">In airway epithelial cells, localizes to motile cilia.</text>
</comment>
<comment type="miscellaneous">
    <text>Several bitter taste receptors are expressed in a single taste receptor cell.</text>
</comment>
<comment type="similarity">
    <text evidence="3">Belongs to the G-protein coupled receptor T2R family.</text>
</comment>